<gene>
    <name type="ordered locus">BMA10247_0358</name>
</gene>
<name>Y2858_BURM7</name>
<keyword id="KW-0963">Cytoplasm</keyword>
<keyword id="KW-0238">DNA-binding</keyword>
<keyword id="KW-0804">Transcription</keyword>
<keyword id="KW-0805">Transcription regulation</keyword>
<protein>
    <recommendedName>
        <fullName evidence="1">Probable transcriptional regulatory protein BMA10247_0358</fullName>
    </recommendedName>
</protein>
<evidence type="ECO:0000255" key="1">
    <source>
        <dbReference type="HAMAP-Rule" id="MF_00693"/>
    </source>
</evidence>
<feature type="chain" id="PRO_1000045282" description="Probable transcriptional regulatory protein BMA10247_0358">
    <location>
        <begin position="1"/>
        <end position="242"/>
    </location>
</feature>
<sequence>MAGHSKWANIKHKKAAADAKRGKIWTRLIKEIQVAARLGGGDVNSNPRLRLAVDKAADANMPKDNVKRAIDRGVGGADGANYEEIRYEGYGIGGAAIIVDTLTDNRTRTVAEVRHAFSKFGGNMGTDGSVAFMFDHVGQFLFAPGTSEDALMEAALEAGANDVNTNDDGSIEVLCDWQEFSKVKDALEAAGFKAELAEVTMKPQNEVDFTGEDAVKMQKLLDALENLDDVQEVYTNAVVVEE</sequence>
<proteinExistence type="inferred from homology"/>
<accession>A3MI47</accession>
<reference key="1">
    <citation type="journal article" date="2010" name="Genome Biol. Evol.">
        <title>Continuing evolution of Burkholderia mallei through genome reduction and large-scale rearrangements.</title>
        <authorList>
            <person name="Losada L."/>
            <person name="Ronning C.M."/>
            <person name="DeShazer D."/>
            <person name="Woods D."/>
            <person name="Fedorova N."/>
            <person name="Kim H.S."/>
            <person name="Shabalina S.A."/>
            <person name="Pearson T.R."/>
            <person name="Brinkac L."/>
            <person name="Tan P."/>
            <person name="Nandi T."/>
            <person name="Crabtree J."/>
            <person name="Badger J."/>
            <person name="Beckstrom-Sternberg S."/>
            <person name="Saqib M."/>
            <person name="Schutzer S.E."/>
            <person name="Keim P."/>
            <person name="Nierman W.C."/>
        </authorList>
    </citation>
    <scope>NUCLEOTIDE SEQUENCE [LARGE SCALE GENOMIC DNA]</scope>
    <source>
        <strain>NCTC 10247</strain>
    </source>
</reference>
<dbReference type="EMBL" id="CP000548">
    <property type="protein sequence ID" value="ABO05803.1"/>
    <property type="molecule type" value="Genomic_DNA"/>
</dbReference>
<dbReference type="RefSeq" id="WP_004185607.1">
    <property type="nucleotide sequence ID" value="NZ_CP007802.1"/>
</dbReference>
<dbReference type="SMR" id="A3MI47"/>
<dbReference type="KEGG" id="bmaz:BM44_2649"/>
<dbReference type="KEGG" id="bmn:BMA10247_0358"/>
<dbReference type="PATRIC" id="fig|320389.8.peg.2989"/>
<dbReference type="GO" id="GO:0005829">
    <property type="term" value="C:cytosol"/>
    <property type="evidence" value="ECO:0007669"/>
    <property type="project" value="TreeGrafter"/>
</dbReference>
<dbReference type="GO" id="GO:0003677">
    <property type="term" value="F:DNA binding"/>
    <property type="evidence" value="ECO:0007669"/>
    <property type="project" value="UniProtKB-UniRule"/>
</dbReference>
<dbReference type="GO" id="GO:0006355">
    <property type="term" value="P:regulation of DNA-templated transcription"/>
    <property type="evidence" value="ECO:0007669"/>
    <property type="project" value="UniProtKB-UniRule"/>
</dbReference>
<dbReference type="FunFam" id="1.10.10.200:FF:000001">
    <property type="entry name" value="Probable transcriptional regulatory protein YebC"/>
    <property type="match status" value="1"/>
</dbReference>
<dbReference type="FunFam" id="3.30.70.980:FF:000002">
    <property type="entry name" value="Probable transcriptional regulatory protein YebC"/>
    <property type="match status" value="1"/>
</dbReference>
<dbReference type="Gene3D" id="1.10.10.200">
    <property type="match status" value="1"/>
</dbReference>
<dbReference type="Gene3D" id="3.30.70.980">
    <property type="match status" value="2"/>
</dbReference>
<dbReference type="HAMAP" id="MF_00693">
    <property type="entry name" value="Transcrip_reg_TACO1"/>
    <property type="match status" value="1"/>
</dbReference>
<dbReference type="InterPro" id="IPR017856">
    <property type="entry name" value="Integrase-like_N"/>
</dbReference>
<dbReference type="InterPro" id="IPR048300">
    <property type="entry name" value="TACO1_YebC-like_2nd/3rd_dom"/>
</dbReference>
<dbReference type="InterPro" id="IPR049083">
    <property type="entry name" value="TACO1_YebC_N"/>
</dbReference>
<dbReference type="InterPro" id="IPR002876">
    <property type="entry name" value="Transcrip_reg_TACO1-like"/>
</dbReference>
<dbReference type="InterPro" id="IPR026564">
    <property type="entry name" value="Transcrip_reg_TACO1-like_dom3"/>
</dbReference>
<dbReference type="InterPro" id="IPR029072">
    <property type="entry name" value="YebC-like"/>
</dbReference>
<dbReference type="NCBIfam" id="NF001030">
    <property type="entry name" value="PRK00110.1"/>
    <property type="match status" value="1"/>
</dbReference>
<dbReference type="NCBIfam" id="NF009044">
    <property type="entry name" value="PRK12378.1"/>
    <property type="match status" value="1"/>
</dbReference>
<dbReference type="NCBIfam" id="TIGR01033">
    <property type="entry name" value="YebC/PmpR family DNA-binding transcriptional regulator"/>
    <property type="match status" value="1"/>
</dbReference>
<dbReference type="PANTHER" id="PTHR12532:SF6">
    <property type="entry name" value="TRANSCRIPTIONAL REGULATORY PROTEIN YEBC-RELATED"/>
    <property type="match status" value="1"/>
</dbReference>
<dbReference type="PANTHER" id="PTHR12532">
    <property type="entry name" value="TRANSLATIONAL ACTIVATOR OF CYTOCHROME C OXIDASE 1"/>
    <property type="match status" value="1"/>
</dbReference>
<dbReference type="Pfam" id="PF20772">
    <property type="entry name" value="TACO1_YebC_N"/>
    <property type="match status" value="1"/>
</dbReference>
<dbReference type="Pfam" id="PF01709">
    <property type="entry name" value="Transcrip_reg"/>
    <property type="match status" value="1"/>
</dbReference>
<dbReference type="SUPFAM" id="SSF75625">
    <property type="entry name" value="YebC-like"/>
    <property type="match status" value="1"/>
</dbReference>
<comment type="subcellular location">
    <subcellularLocation>
        <location evidence="1">Cytoplasm</location>
    </subcellularLocation>
</comment>
<comment type="similarity">
    <text evidence="1">Belongs to the TACO1 family.</text>
</comment>
<organism>
    <name type="scientific">Burkholderia mallei (strain NCTC 10247)</name>
    <dbReference type="NCBI Taxonomy" id="320389"/>
    <lineage>
        <taxon>Bacteria</taxon>
        <taxon>Pseudomonadati</taxon>
        <taxon>Pseudomonadota</taxon>
        <taxon>Betaproteobacteria</taxon>
        <taxon>Burkholderiales</taxon>
        <taxon>Burkholderiaceae</taxon>
        <taxon>Burkholderia</taxon>
        <taxon>pseudomallei group</taxon>
    </lineage>
</organism>